<keyword id="KW-0687">Ribonucleoprotein</keyword>
<keyword id="KW-0689">Ribosomal protein</keyword>
<keyword id="KW-0694">RNA-binding</keyword>
<keyword id="KW-0699">rRNA-binding</keyword>
<sequence length="122" mass="13169">MIQQESRLKVADNSGARELLTIKVLGGSGRKYAYIGDIIVATVKQATPGGVVKKGDVVKAVVVRTKSGARRPDGSYIKFDENAAVIIKDDKSPRGTRIFGPVARELRDSNFMKIVSLAPEVL</sequence>
<evidence type="ECO:0000255" key="1">
    <source>
        <dbReference type="HAMAP-Rule" id="MF_01367"/>
    </source>
</evidence>
<evidence type="ECO:0000305" key="2"/>
<gene>
    <name evidence="1" type="primary">rplN</name>
    <name type="ordered locus">BcerKBAB4_0115</name>
</gene>
<protein>
    <recommendedName>
        <fullName evidence="1">Large ribosomal subunit protein uL14</fullName>
    </recommendedName>
    <alternativeName>
        <fullName evidence="2">50S ribosomal protein L14</fullName>
    </alternativeName>
</protein>
<proteinExistence type="inferred from homology"/>
<name>RL14_BACMK</name>
<accession>A9VP87</accession>
<comment type="function">
    <text evidence="1">Binds to 23S rRNA. Forms part of two intersubunit bridges in the 70S ribosome.</text>
</comment>
<comment type="subunit">
    <text evidence="1">Part of the 50S ribosomal subunit. Forms a cluster with proteins L3 and L19. In the 70S ribosome, L14 and L19 interact and together make contacts with the 16S rRNA in bridges B5 and B8.</text>
</comment>
<comment type="similarity">
    <text evidence="1">Belongs to the universal ribosomal protein uL14 family.</text>
</comment>
<organism>
    <name type="scientific">Bacillus mycoides (strain KBAB4)</name>
    <name type="common">Bacillus weihenstephanensis</name>
    <dbReference type="NCBI Taxonomy" id="315730"/>
    <lineage>
        <taxon>Bacteria</taxon>
        <taxon>Bacillati</taxon>
        <taxon>Bacillota</taxon>
        <taxon>Bacilli</taxon>
        <taxon>Bacillales</taxon>
        <taxon>Bacillaceae</taxon>
        <taxon>Bacillus</taxon>
        <taxon>Bacillus cereus group</taxon>
    </lineage>
</organism>
<dbReference type="EMBL" id="CP000903">
    <property type="protein sequence ID" value="ABY41384.1"/>
    <property type="molecule type" value="Genomic_DNA"/>
</dbReference>
<dbReference type="RefSeq" id="WP_002063420.1">
    <property type="nucleotide sequence ID" value="NZ_CAKMRX030000129.1"/>
</dbReference>
<dbReference type="SMR" id="A9VP87"/>
<dbReference type="KEGG" id="bwe:BcerKBAB4_0115"/>
<dbReference type="eggNOG" id="COG0093">
    <property type="taxonomic scope" value="Bacteria"/>
</dbReference>
<dbReference type="HOGENOM" id="CLU_095071_2_1_9"/>
<dbReference type="Proteomes" id="UP000002154">
    <property type="component" value="Chromosome"/>
</dbReference>
<dbReference type="GO" id="GO:0022625">
    <property type="term" value="C:cytosolic large ribosomal subunit"/>
    <property type="evidence" value="ECO:0007669"/>
    <property type="project" value="TreeGrafter"/>
</dbReference>
<dbReference type="GO" id="GO:0070180">
    <property type="term" value="F:large ribosomal subunit rRNA binding"/>
    <property type="evidence" value="ECO:0007669"/>
    <property type="project" value="TreeGrafter"/>
</dbReference>
<dbReference type="GO" id="GO:0003735">
    <property type="term" value="F:structural constituent of ribosome"/>
    <property type="evidence" value="ECO:0007669"/>
    <property type="project" value="InterPro"/>
</dbReference>
<dbReference type="GO" id="GO:0006412">
    <property type="term" value="P:translation"/>
    <property type="evidence" value="ECO:0007669"/>
    <property type="project" value="UniProtKB-UniRule"/>
</dbReference>
<dbReference type="CDD" id="cd00337">
    <property type="entry name" value="Ribosomal_uL14"/>
    <property type="match status" value="1"/>
</dbReference>
<dbReference type="FunFam" id="2.40.150.20:FF:000001">
    <property type="entry name" value="50S ribosomal protein L14"/>
    <property type="match status" value="1"/>
</dbReference>
<dbReference type="Gene3D" id="2.40.150.20">
    <property type="entry name" value="Ribosomal protein L14"/>
    <property type="match status" value="1"/>
</dbReference>
<dbReference type="HAMAP" id="MF_01367">
    <property type="entry name" value="Ribosomal_uL14"/>
    <property type="match status" value="1"/>
</dbReference>
<dbReference type="InterPro" id="IPR000218">
    <property type="entry name" value="Ribosomal_uL14"/>
</dbReference>
<dbReference type="InterPro" id="IPR005745">
    <property type="entry name" value="Ribosomal_uL14_bac-type"/>
</dbReference>
<dbReference type="InterPro" id="IPR019972">
    <property type="entry name" value="Ribosomal_uL14_CS"/>
</dbReference>
<dbReference type="InterPro" id="IPR036853">
    <property type="entry name" value="Ribosomal_uL14_sf"/>
</dbReference>
<dbReference type="NCBIfam" id="TIGR01067">
    <property type="entry name" value="rplN_bact"/>
    <property type="match status" value="1"/>
</dbReference>
<dbReference type="PANTHER" id="PTHR11761">
    <property type="entry name" value="50S/60S RIBOSOMAL PROTEIN L14/L23"/>
    <property type="match status" value="1"/>
</dbReference>
<dbReference type="PANTHER" id="PTHR11761:SF3">
    <property type="entry name" value="LARGE RIBOSOMAL SUBUNIT PROTEIN UL14M"/>
    <property type="match status" value="1"/>
</dbReference>
<dbReference type="Pfam" id="PF00238">
    <property type="entry name" value="Ribosomal_L14"/>
    <property type="match status" value="1"/>
</dbReference>
<dbReference type="SMART" id="SM01374">
    <property type="entry name" value="Ribosomal_L14"/>
    <property type="match status" value="1"/>
</dbReference>
<dbReference type="SUPFAM" id="SSF50193">
    <property type="entry name" value="Ribosomal protein L14"/>
    <property type="match status" value="1"/>
</dbReference>
<dbReference type="PROSITE" id="PS00049">
    <property type="entry name" value="RIBOSOMAL_L14"/>
    <property type="match status" value="1"/>
</dbReference>
<feature type="chain" id="PRO_1000144224" description="Large ribosomal subunit protein uL14">
    <location>
        <begin position="1"/>
        <end position="122"/>
    </location>
</feature>
<reference key="1">
    <citation type="journal article" date="2008" name="Chem. Biol. Interact.">
        <title>Extending the Bacillus cereus group genomics to putative food-borne pathogens of different toxicity.</title>
        <authorList>
            <person name="Lapidus A."/>
            <person name="Goltsman E."/>
            <person name="Auger S."/>
            <person name="Galleron N."/>
            <person name="Segurens B."/>
            <person name="Dossat C."/>
            <person name="Land M.L."/>
            <person name="Broussolle V."/>
            <person name="Brillard J."/>
            <person name="Guinebretiere M.-H."/>
            <person name="Sanchis V."/>
            <person name="Nguen-the C."/>
            <person name="Lereclus D."/>
            <person name="Richardson P."/>
            <person name="Wincker P."/>
            <person name="Weissenbach J."/>
            <person name="Ehrlich S.D."/>
            <person name="Sorokin A."/>
        </authorList>
    </citation>
    <scope>NUCLEOTIDE SEQUENCE [LARGE SCALE GENOMIC DNA]</scope>
    <source>
        <strain>KBAB4</strain>
    </source>
</reference>